<protein>
    <recommendedName>
        <fullName>(3R)-3-hydroxyacyl-CoA dehydrogenase</fullName>
        <ecNumber evidence="3">1.1.1.n12</ecNumber>
    </recommendedName>
    <alternativeName>
        <fullName>17-beta-hydroxysteroid dehydrogenase 8</fullName>
        <shortName>17-beta-HSD 8</shortName>
    </alternativeName>
    <alternativeName>
        <fullName evidence="3">3-ketoacyl-[acyl-carrier-protein] reductase alpha subunit</fullName>
        <shortName evidence="3">KAR alpha subunit</shortName>
    </alternativeName>
    <alternativeName>
        <fullName>3-oxoacyl-[acyl-carrier-protein] reductase</fullName>
    </alternativeName>
    <alternativeName>
        <fullName>Estradiol 17-beta-dehydrogenase 8</fullName>
        <ecNumber evidence="3">1.1.1.62</ecNumber>
    </alternativeName>
    <alternativeName>
        <fullName>Testosterone 17-beta-dehydrogenase 8</fullName>
        <ecNumber evidence="3">1.1.1.239</ecNumber>
    </alternativeName>
</protein>
<proteinExistence type="evidence at protein level"/>
<name>DHB8_RAT</name>
<organism>
    <name type="scientific">Rattus norvegicus</name>
    <name type="common">Rat</name>
    <dbReference type="NCBI Taxonomy" id="10116"/>
    <lineage>
        <taxon>Eukaryota</taxon>
        <taxon>Metazoa</taxon>
        <taxon>Chordata</taxon>
        <taxon>Craniata</taxon>
        <taxon>Vertebrata</taxon>
        <taxon>Euteleostomi</taxon>
        <taxon>Mammalia</taxon>
        <taxon>Eutheria</taxon>
        <taxon>Euarchontoglires</taxon>
        <taxon>Glires</taxon>
        <taxon>Rodentia</taxon>
        <taxon>Myomorpha</taxon>
        <taxon>Muroidea</taxon>
        <taxon>Muridae</taxon>
        <taxon>Murinae</taxon>
        <taxon>Rattus</taxon>
    </lineage>
</organism>
<dbReference type="EC" id="1.1.1.n12" evidence="3"/>
<dbReference type="EC" id="1.1.1.62" evidence="3"/>
<dbReference type="EC" id="1.1.1.239" evidence="3"/>
<dbReference type="EMBL" id="BX883042">
    <property type="protein sequence ID" value="CAE83931.1"/>
    <property type="molecule type" value="Genomic_DNA"/>
</dbReference>
<dbReference type="RefSeq" id="NP_997694.1">
    <property type="nucleotide sequence ID" value="NM_212529.1"/>
</dbReference>
<dbReference type="SMR" id="Q6MGB5"/>
<dbReference type="FunCoup" id="Q6MGB5">
    <property type="interactions" value="862"/>
</dbReference>
<dbReference type="IntAct" id="Q6MGB5">
    <property type="interactions" value="1"/>
</dbReference>
<dbReference type="STRING" id="10116.ENSRNOP00000000542"/>
<dbReference type="iPTMnet" id="Q6MGB5"/>
<dbReference type="PhosphoSitePlus" id="Q6MGB5"/>
<dbReference type="PaxDb" id="10116-ENSRNOP00000000542"/>
<dbReference type="GeneID" id="361802"/>
<dbReference type="KEGG" id="rno:361802"/>
<dbReference type="UCSC" id="RGD:1303158">
    <property type="organism name" value="rat"/>
</dbReference>
<dbReference type="AGR" id="RGD:1303158"/>
<dbReference type="CTD" id="7923"/>
<dbReference type="RGD" id="1303158">
    <property type="gene designation" value="Hsd17b8"/>
</dbReference>
<dbReference type="eggNOG" id="KOG1200">
    <property type="taxonomic scope" value="Eukaryota"/>
</dbReference>
<dbReference type="HOGENOM" id="CLU_010194_1_3_1"/>
<dbReference type="InParanoid" id="Q6MGB5"/>
<dbReference type="PhylomeDB" id="Q6MGB5"/>
<dbReference type="TreeFam" id="TF313099"/>
<dbReference type="Reactome" id="R-RNO-75105">
    <property type="pathway name" value="Fatty acyl-CoA biosynthesis"/>
</dbReference>
<dbReference type="UniPathway" id="UPA00094"/>
<dbReference type="UniPathway" id="UPA00660"/>
<dbReference type="UniPathway" id="UPA00769"/>
<dbReference type="PRO" id="PR:Q6MGB5"/>
<dbReference type="Proteomes" id="UP000002494">
    <property type="component" value="Chromosome 20"/>
</dbReference>
<dbReference type="Bgee" id="ENSRNOG00000000466">
    <property type="expression patterns" value="Expressed in ovary and 20 other cell types or tissues"/>
</dbReference>
<dbReference type="ExpressionAtlas" id="Q6MGB5">
    <property type="expression patterns" value="baseline and differential"/>
</dbReference>
<dbReference type="GO" id="GO:0016020">
    <property type="term" value="C:membrane"/>
    <property type="evidence" value="ECO:0000266"/>
    <property type="project" value="RGD"/>
</dbReference>
<dbReference type="GO" id="GO:0005740">
    <property type="term" value="C:mitochondrial envelope"/>
    <property type="evidence" value="ECO:0000266"/>
    <property type="project" value="RGD"/>
</dbReference>
<dbReference type="GO" id="GO:0005759">
    <property type="term" value="C:mitochondrial matrix"/>
    <property type="evidence" value="ECO:0000266"/>
    <property type="project" value="RGD"/>
</dbReference>
<dbReference type="GO" id="GO:1990204">
    <property type="term" value="C:oxidoreductase complex"/>
    <property type="evidence" value="ECO:0000266"/>
    <property type="project" value="RGD"/>
</dbReference>
<dbReference type="GO" id="GO:0005886">
    <property type="term" value="C:plasma membrane"/>
    <property type="evidence" value="ECO:0000266"/>
    <property type="project" value="RGD"/>
</dbReference>
<dbReference type="GO" id="GO:0106386">
    <property type="term" value="F:(3R)-hydroxyacyl-CoA dehydrogenase (NAD+) activity"/>
    <property type="evidence" value="ECO:0000250"/>
    <property type="project" value="UniProtKB"/>
</dbReference>
<dbReference type="GO" id="GO:0004303">
    <property type="term" value="F:estradiol 17-beta-dehydrogenase [NAD(P)+] activity"/>
    <property type="evidence" value="ECO:0000250"/>
    <property type="project" value="UniProtKB"/>
</dbReference>
<dbReference type="GO" id="GO:0070404">
    <property type="term" value="F:NADH binding"/>
    <property type="evidence" value="ECO:0000250"/>
    <property type="project" value="UniProtKB"/>
</dbReference>
<dbReference type="GO" id="GO:0048038">
    <property type="term" value="F:quinone binding"/>
    <property type="evidence" value="ECO:0000318"/>
    <property type="project" value="GO_Central"/>
</dbReference>
<dbReference type="GO" id="GO:0047035">
    <property type="term" value="F:testosterone dehydrogenase (NAD+) activity"/>
    <property type="evidence" value="ECO:0000266"/>
    <property type="project" value="RGD"/>
</dbReference>
<dbReference type="GO" id="GO:0008209">
    <property type="term" value="P:androgen metabolic process"/>
    <property type="evidence" value="ECO:0000266"/>
    <property type="project" value="RGD"/>
</dbReference>
<dbReference type="GO" id="GO:0006703">
    <property type="term" value="P:estrogen biosynthetic process"/>
    <property type="evidence" value="ECO:0000250"/>
    <property type="project" value="UniProtKB"/>
</dbReference>
<dbReference type="GO" id="GO:0008210">
    <property type="term" value="P:estrogen metabolic process"/>
    <property type="evidence" value="ECO:0000266"/>
    <property type="project" value="RGD"/>
</dbReference>
<dbReference type="GO" id="GO:0006633">
    <property type="term" value="P:fatty acid biosynthetic process"/>
    <property type="evidence" value="ECO:0000250"/>
    <property type="project" value="UniProtKB"/>
</dbReference>
<dbReference type="GO" id="GO:0051290">
    <property type="term" value="P:protein heterotetramerization"/>
    <property type="evidence" value="ECO:0000250"/>
    <property type="project" value="UniProtKB"/>
</dbReference>
<dbReference type="CDD" id="cd05333">
    <property type="entry name" value="BKR_SDR_c"/>
    <property type="match status" value="1"/>
</dbReference>
<dbReference type="FunFam" id="3.40.50.720:FF:000231">
    <property type="entry name" value="Estradiol 17-beta-dehydrogenase 8"/>
    <property type="match status" value="1"/>
</dbReference>
<dbReference type="Gene3D" id="3.40.50.720">
    <property type="entry name" value="NAD(P)-binding Rossmann-like Domain"/>
    <property type="match status" value="1"/>
</dbReference>
<dbReference type="InterPro" id="IPR036291">
    <property type="entry name" value="NAD(P)-bd_dom_sf"/>
</dbReference>
<dbReference type="InterPro" id="IPR020904">
    <property type="entry name" value="Sc_DH/Rdtase_CS"/>
</dbReference>
<dbReference type="InterPro" id="IPR002347">
    <property type="entry name" value="SDR_fam"/>
</dbReference>
<dbReference type="NCBIfam" id="NF009466">
    <property type="entry name" value="PRK12826.1-2"/>
    <property type="match status" value="1"/>
</dbReference>
<dbReference type="PANTHER" id="PTHR42760:SF83">
    <property type="entry name" value="(3R)-3-HYDROXYACYL-COA DEHYDROGENASE"/>
    <property type="match status" value="1"/>
</dbReference>
<dbReference type="PANTHER" id="PTHR42760">
    <property type="entry name" value="SHORT-CHAIN DEHYDROGENASES/REDUCTASES FAMILY MEMBER"/>
    <property type="match status" value="1"/>
</dbReference>
<dbReference type="Pfam" id="PF13561">
    <property type="entry name" value="adh_short_C2"/>
    <property type="match status" value="1"/>
</dbReference>
<dbReference type="PRINTS" id="PR00081">
    <property type="entry name" value="GDHRDH"/>
</dbReference>
<dbReference type="PRINTS" id="PR00080">
    <property type="entry name" value="SDRFAMILY"/>
</dbReference>
<dbReference type="SMART" id="SM00822">
    <property type="entry name" value="PKS_KR"/>
    <property type="match status" value="1"/>
</dbReference>
<dbReference type="SUPFAM" id="SSF51735">
    <property type="entry name" value="NAD(P)-binding Rossmann-fold domains"/>
    <property type="match status" value="1"/>
</dbReference>
<dbReference type="PROSITE" id="PS00061">
    <property type="entry name" value="ADH_SHORT"/>
    <property type="match status" value="1"/>
</dbReference>
<sequence>MASQLRLRSALALVTGAGSGIGRAISVRLAAEGAAVAACDLDGAAAQDTVRLLGNPGSEDREPRGKHAAFQADVSEGPAAKRLLEQVQACFFRPPSVVVSCAGITRDEFLLHMSEEDWDRVIAVNLKGTFLVTQAAAQALVSSGGRGSIINISSIVGKVGNIGQTNYASSKAGVIGLTQTAARELGRHGIRCNSVLPGFIATPMTQKMPEKVKDKVTAMIPLGHMGDPEDVADVVAFLASEDSGYITGASVEVSGGLFM</sequence>
<comment type="function">
    <text evidence="3">Required for the solubility and assembly of the heterotetramer 3-ketoacyl-[acyl carrier protein] (ACP) reductase functional complex (KAR or KAR1) that forms part of the mitochondrial fatty acid synthase (mtFAS). Alpha-subunit of the KAR complex that acts as scaffold protein required for the stability of carbonyl reductase type-4 (CBR4, beta-subunit of the KAR complex) and for its 3-ketoacyl-ACP reductase activity, thereby participating in mitochondrial fatty acid biosynthesis. Catalyzes the NAD-dependent conversion of (3R)-3-hydroxyacyl-CoA into 3-ketoacyl-CoA (3-oxoacyl-CoA) with no chain length preference; this enzymatic activity is not needed for the KAR function. Prefers (3R)-3-hydroxyacyl-CoA over (3S)-3-hydroxyacyl-CoA and displays enzymatic activity only in the presence of NAD(+). Cooperates with enoyl-CoA hydratase 1 in mitochondria, together they constitute an alternative route to the auxiliary enzyme pathways for the breakdown of Z-PUFA (cis polyunsaturated fatty acid) enoyl-esters. NAD-dependent 17-beta-hydroxysteroid dehydrogenase with highest activity towards estradiol (17beta-estradiol or E2). Has very low activity towards testosterone and dihydrotestosterone (17beta-hydroxy-5alpha-androstan-3-one). Primarily an oxidative enzyme, it can switch to a reductive mode determined in the appropriate physiologic milieu and catalyze the reduction of estrone (E1) to form biologically active 17beta-estradiol.</text>
</comment>
<comment type="catalytic activity">
    <reaction evidence="3">
        <text>a (3R)-3-hydroxyacyl-CoA + NAD(+) = a 3-oxoacyl-CoA + NADH + H(+)</text>
        <dbReference type="Rhea" id="RHEA:32711"/>
        <dbReference type="ChEBI" id="CHEBI:15378"/>
        <dbReference type="ChEBI" id="CHEBI:57319"/>
        <dbReference type="ChEBI" id="CHEBI:57540"/>
        <dbReference type="ChEBI" id="CHEBI:57945"/>
        <dbReference type="ChEBI" id="CHEBI:90726"/>
        <dbReference type="EC" id="1.1.1.n12"/>
    </reaction>
    <physiologicalReaction direction="left-to-right" evidence="3">
        <dbReference type="Rhea" id="RHEA:32712"/>
    </physiologicalReaction>
</comment>
<comment type="catalytic activity">
    <reaction evidence="3">
        <text>17beta-estradiol + NAD(+) = estrone + NADH + H(+)</text>
        <dbReference type="Rhea" id="RHEA:24612"/>
        <dbReference type="ChEBI" id="CHEBI:15378"/>
        <dbReference type="ChEBI" id="CHEBI:16469"/>
        <dbReference type="ChEBI" id="CHEBI:17263"/>
        <dbReference type="ChEBI" id="CHEBI:57540"/>
        <dbReference type="ChEBI" id="CHEBI:57945"/>
        <dbReference type="EC" id="1.1.1.62"/>
    </reaction>
    <physiologicalReaction direction="left-to-right" evidence="3">
        <dbReference type="Rhea" id="RHEA:24613"/>
    </physiologicalReaction>
    <physiologicalReaction direction="right-to-left" evidence="3">
        <dbReference type="Rhea" id="RHEA:24614"/>
    </physiologicalReaction>
</comment>
<comment type="catalytic activity">
    <reaction evidence="3">
        <text>testosterone + NAD(+) = androst-4-ene-3,17-dione + NADH + H(+)</text>
        <dbReference type="Rhea" id="RHEA:14929"/>
        <dbReference type="ChEBI" id="CHEBI:15378"/>
        <dbReference type="ChEBI" id="CHEBI:16422"/>
        <dbReference type="ChEBI" id="CHEBI:17347"/>
        <dbReference type="ChEBI" id="CHEBI:57540"/>
        <dbReference type="ChEBI" id="CHEBI:57945"/>
        <dbReference type="EC" id="1.1.1.239"/>
    </reaction>
    <physiologicalReaction direction="left-to-right" evidence="3">
        <dbReference type="Rhea" id="RHEA:14930"/>
    </physiologicalReaction>
</comment>
<comment type="catalytic activity">
    <reaction evidence="3">
        <text>17beta-hydroxy-5alpha-androstan-3-one + NAD(+) = 5alpha-androstan-3,17-dione + NADH + H(+)</text>
        <dbReference type="Rhea" id="RHEA:41992"/>
        <dbReference type="ChEBI" id="CHEBI:15378"/>
        <dbReference type="ChEBI" id="CHEBI:15994"/>
        <dbReference type="ChEBI" id="CHEBI:16330"/>
        <dbReference type="ChEBI" id="CHEBI:57540"/>
        <dbReference type="ChEBI" id="CHEBI:57945"/>
    </reaction>
    <physiologicalReaction direction="left-to-right" evidence="3">
        <dbReference type="Rhea" id="RHEA:41993"/>
    </physiologicalReaction>
</comment>
<comment type="pathway">
    <text evidence="3">Steroid biosynthesis; estrogen biosynthesis.</text>
</comment>
<comment type="pathway">
    <text evidence="3">Lipid metabolism; fatty acid biosynthesis.</text>
</comment>
<comment type="pathway">
    <text evidence="3">Lipid metabolism; mitochondrial fatty acid beta-oxidation.</text>
</comment>
<comment type="subunit">
    <text evidence="3">Heterotetramer with CBR4; contains two molecules of HSD17B8 and CBR4.</text>
</comment>
<comment type="subcellular location">
    <subcellularLocation>
        <location evidence="3">Mitochondrion matrix</location>
    </subcellularLocation>
</comment>
<comment type="tissue specificity">
    <text evidence="5">Expressed in ovary at protein level.</text>
</comment>
<comment type="similarity">
    <text evidence="6">Belongs to the short-chain dehydrogenases/reductases (SDR) family.</text>
</comment>
<accession>Q6MGB5</accession>
<evidence type="ECO:0000250" key="1"/>
<evidence type="ECO:0000250" key="2">
    <source>
        <dbReference type="UniProtKB" id="P50171"/>
    </source>
</evidence>
<evidence type="ECO:0000250" key="3">
    <source>
        <dbReference type="UniProtKB" id="Q92506"/>
    </source>
</evidence>
<evidence type="ECO:0000255" key="4">
    <source>
        <dbReference type="PROSITE-ProRule" id="PRU10001"/>
    </source>
</evidence>
<evidence type="ECO:0000269" key="5">
    <source>
    </source>
</evidence>
<evidence type="ECO:0000305" key="6"/>
<evidence type="ECO:0007744" key="7">
    <source>
    </source>
</evidence>
<gene>
    <name type="primary">Hsd17b8</name>
</gene>
<reference key="1">
    <citation type="journal article" date="2004" name="Genome Res.">
        <title>The genomic sequence and comparative analysis of the rat major histocompatibility complex.</title>
        <authorList>
            <person name="Hurt P."/>
            <person name="Walter L."/>
            <person name="Sudbrak R."/>
            <person name="Klages S."/>
            <person name="Mueller I."/>
            <person name="Shiina T."/>
            <person name="Inoko H."/>
            <person name="Lehrach H."/>
            <person name="Guenther E."/>
            <person name="Reinhardt R."/>
            <person name="Himmelbauer H."/>
        </authorList>
    </citation>
    <scope>NUCLEOTIDE SEQUENCE [LARGE SCALE GENOMIC DNA]</scope>
    <source>
        <strain>Brown Norway</strain>
    </source>
</reference>
<reference key="2">
    <citation type="journal article" date="1998" name="J. Biol. Chem.">
        <title>Characterization of Ke 6, a new 17beta-hydroxysteroid dehydrogenase, and its expression in gonadal tissues.</title>
        <authorList>
            <person name="Fomitcheva J."/>
            <person name="Baker M.E."/>
            <person name="Anderson E."/>
            <person name="Lee G.Y."/>
            <person name="Aziz N."/>
        </authorList>
    </citation>
    <scope>TISSUE SPECIFICITY</scope>
</reference>
<reference key="3">
    <citation type="journal article" date="2012" name="Nat. Commun.">
        <title>Quantitative maps of protein phosphorylation sites across 14 different rat organs and tissues.</title>
        <authorList>
            <person name="Lundby A."/>
            <person name="Secher A."/>
            <person name="Lage K."/>
            <person name="Nordsborg N.B."/>
            <person name="Dmytriyev A."/>
            <person name="Lundby C."/>
            <person name="Olsen J.V."/>
        </authorList>
    </citation>
    <scope>PHOSPHORYLATION [LARGE SCALE ANALYSIS] AT SER-58</scope>
    <scope>IDENTIFICATION BY MASS SPECTROMETRY [LARGE SCALE ANALYSIS]</scope>
</reference>
<keyword id="KW-0007">Acetylation</keyword>
<keyword id="KW-0275">Fatty acid biosynthesis</keyword>
<keyword id="KW-0276">Fatty acid metabolism</keyword>
<keyword id="KW-0444">Lipid biosynthesis</keyword>
<keyword id="KW-0443">Lipid metabolism</keyword>
<keyword id="KW-0496">Mitochondrion</keyword>
<keyword id="KW-0520">NAD</keyword>
<keyword id="KW-0560">Oxidoreductase</keyword>
<keyword id="KW-0597">Phosphoprotein</keyword>
<keyword id="KW-1185">Reference proteome</keyword>
<keyword id="KW-0752">Steroid biosynthesis</keyword>
<feature type="chain" id="PRO_0000304877" description="(3R)-3-hydroxyacyl-CoA dehydrogenase">
    <location>
        <begin position="1"/>
        <end position="259"/>
    </location>
</feature>
<feature type="active site" description="Proton acceptor" evidence="4">
    <location>
        <position position="167"/>
    </location>
</feature>
<feature type="binding site" evidence="3">
    <location>
        <begin position="13"/>
        <end position="21"/>
    </location>
    <ligand>
        <name>NAD(+)</name>
        <dbReference type="ChEBI" id="CHEBI:57540"/>
    </ligand>
</feature>
<feature type="binding site" evidence="3">
    <location>
        <begin position="40"/>
        <end position="41"/>
    </location>
    <ligand>
        <name>NAD(+)</name>
        <dbReference type="ChEBI" id="CHEBI:57540"/>
    </ligand>
</feature>
<feature type="binding site" evidence="3">
    <location>
        <begin position="72"/>
        <end position="74"/>
    </location>
    <ligand>
        <name>NAD(+)</name>
        <dbReference type="ChEBI" id="CHEBI:57540"/>
    </ligand>
</feature>
<feature type="binding site" evidence="1">
    <location>
        <position position="154"/>
    </location>
    <ligand>
        <name>substrate</name>
    </ligand>
</feature>
<feature type="binding site" evidence="3">
    <location>
        <begin position="167"/>
        <end position="171"/>
    </location>
    <ligand>
        <name>NAD(+)</name>
        <dbReference type="ChEBI" id="CHEBI:57540"/>
    </ligand>
</feature>
<feature type="binding site" evidence="3">
    <location>
        <begin position="200"/>
        <end position="202"/>
    </location>
    <ligand>
        <name>NAD(+)</name>
        <dbReference type="ChEBI" id="CHEBI:57540"/>
    </ligand>
</feature>
<feature type="modified residue" description="Phosphoserine" evidence="7">
    <location>
        <position position="58"/>
    </location>
</feature>
<feature type="modified residue" description="N6-acetyllysine" evidence="2">
    <location>
        <position position="66"/>
    </location>
</feature>
<feature type="modified residue" description="N6-succinyllysine" evidence="2">
    <location>
        <position position="158"/>
    </location>
</feature>
<feature type="modified residue" description="N6-succinyllysine" evidence="2">
    <location>
        <position position="171"/>
    </location>
</feature>